<keyword id="KW-1185">Reference proteome</keyword>
<keyword id="KW-0687">Ribonucleoprotein</keyword>
<keyword id="KW-0689">Ribosomal protein</keyword>
<keyword id="KW-0694">RNA-binding</keyword>
<keyword id="KW-0699">rRNA-binding</keyword>
<protein>
    <recommendedName>
        <fullName evidence="1">Small ribosomal subunit protein uS17</fullName>
    </recommendedName>
    <alternativeName>
        <fullName evidence="2">30S ribosomal protein S17</fullName>
    </alternativeName>
</protein>
<accession>Q3J5R3</accession>
<organism>
    <name type="scientific">Cereibacter sphaeroides (strain ATCC 17023 / DSM 158 / JCM 6121 / CCUG 31486 / LMG 2827 / NBRC 12203 / NCIMB 8253 / ATH 2.4.1.)</name>
    <name type="common">Rhodobacter sphaeroides</name>
    <dbReference type="NCBI Taxonomy" id="272943"/>
    <lineage>
        <taxon>Bacteria</taxon>
        <taxon>Pseudomonadati</taxon>
        <taxon>Pseudomonadota</taxon>
        <taxon>Alphaproteobacteria</taxon>
        <taxon>Rhodobacterales</taxon>
        <taxon>Paracoccaceae</taxon>
        <taxon>Cereibacter</taxon>
    </lineage>
</organism>
<feature type="chain" id="PRO_0000233554" description="Small ribosomal subunit protein uS17">
    <location>
        <begin position="1"/>
        <end position="80"/>
    </location>
</feature>
<dbReference type="EMBL" id="CP000143">
    <property type="protein sequence ID" value="ABA77871.1"/>
    <property type="molecule type" value="Genomic_DNA"/>
</dbReference>
<dbReference type="RefSeq" id="WP_002722502.1">
    <property type="nucleotide sequence ID" value="NZ_CP030271.1"/>
</dbReference>
<dbReference type="RefSeq" id="YP_351772.1">
    <property type="nucleotide sequence ID" value="NC_007493.2"/>
</dbReference>
<dbReference type="SMR" id="Q3J5R3"/>
<dbReference type="STRING" id="272943.RSP_6017"/>
<dbReference type="EnsemblBacteria" id="ABA77871">
    <property type="protein sequence ID" value="ABA77871"/>
    <property type="gene ID" value="RSP_6017"/>
</dbReference>
<dbReference type="GeneID" id="67445509"/>
<dbReference type="KEGG" id="rsp:RSP_6017"/>
<dbReference type="PATRIC" id="fig|272943.9.peg.602"/>
<dbReference type="eggNOG" id="COG0186">
    <property type="taxonomic scope" value="Bacteria"/>
</dbReference>
<dbReference type="OrthoDB" id="9811714at2"/>
<dbReference type="PhylomeDB" id="Q3J5R3"/>
<dbReference type="Proteomes" id="UP000002703">
    <property type="component" value="Chromosome 1"/>
</dbReference>
<dbReference type="GO" id="GO:0022627">
    <property type="term" value="C:cytosolic small ribosomal subunit"/>
    <property type="evidence" value="ECO:0007669"/>
    <property type="project" value="TreeGrafter"/>
</dbReference>
<dbReference type="GO" id="GO:0019843">
    <property type="term" value="F:rRNA binding"/>
    <property type="evidence" value="ECO:0007669"/>
    <property type="project" value="UniProtKB-UniRule"/>
</dbReference>
<dbReference type="GO" id="GO:0003735">
    <property type="term" value="F:structural constituent of ribosome"/>
    <property type="evidence" value="ECO:0007669"/>
    <property type="project" value="InterPro"/>
</dbReference>
<dbReference type="GO" id="GO:0006412">
    <property type="term" value="P:translation"/>
    <property type="evidence" value="ECO:0007669"/>
    <property type="project" value="UniProtKB-UniRule"/>
</dbReference>
<dbReference type="CDD" id="cd00364">
    <property type="entry name" value="Ribosomal_uS17"/>
    <property type="match status" value="1"/>
</dbReference>
<dbReference type="Gene3D" id="2.40.50.140">
    <property type="entry name" value="Nucleic acid-binding proteins"/>
    <property type="match status" value="1"/>
</dbReference>
<dbReference type="HAMAP" id="MF_01345_B">
    <property type="entry name" value="Ribosomal_uS17_B"/>
    <property type="match status" value="1"/>
</dbReference>
<dbReference type="InterPro" id="IPR012340">
    <property type="entry name" value="NA-bd_OB-fold"/>
</dbReference>
<dbReference type="InterPro" id="IPR000266">
    <property type="entry name" value="Ribosomal_uS17"/>
</dbReference>
<dbReference type="InterPro" id="IPR019984">
    <property type="entry name" value="Ribosomal_uS17_bact/chlr"/>
</dbReference>
<dbReference type="NCBIfam" id="NF004123">
    <property type="entry name" value="PRK05610.1"/>
    <property type="match status" value="1"/>
</dbReference>
<dbReference type="NCBIfam" id="TIGR03635">
    <property type="entry name" value="uS17_bact"/>
    <property type="match status" value="1"/>
</dbReference>
<dbReference type="PANTHER" id="PTHR10744">
    <property type="entry name" value="40S RIBOSOMAL PROTEIN S11 FAMILY MEMBER"/>
    <property type="match status" value="1"/>
</dbReference>
<dbReference type="PANTHER" id="PTHR10744:SF1">
    <property type="entry name" value="SMALL RIBOSOMAL SUBUNIT PROTEIN US17M"/>
    <property type="match status" value="1"/>
</dbReference>
<dbReference type="Pfam" id="PF00366">
    <property type="entry name" value="Ribosomal_S17"/>
    <property type="match status" value="1"/>
</dbReference>
<dbReference type="PRINTS" id="PR00973">
    <property type="entry name" value="RIBOSOMALS17"/>
</dbReference>
<dbReference type="SUPFAM" id="SSF50249">
    <property type="entry name" value="Nucleic acid-binding proteins"/>
    <property type="match status" value="1"/>
</dbReference>
<reference key="1">
    <citation type="submission" date="2005-09" db="EMBL/GenBank/DDBJ databases">
        <title>Complete sequence of chromosome 1 of Rhodobacter sphaeroides 2.4.1.</title>
        <authorList>
            <person name="Copeland A."/>
            <person name="Lucas S."/>
            <person name="Lapidus A."/>
            <person name="Barry K."/>
            <person name="Detter J.C."/>
            <person name="Glavina T."/>
            <person name="Hammon N."/>
            <person name="Israni S."/>
            <person name="Pitluck S."/>
            <person name="Richardson P."/>
            <person name="Mackenzie C."/>
            <person name="Choudhary M."/>
            <person name="Larimer F."/>
            <person name="Hauser L.J."/>
            <person name="Land M."/>
            <person name="Donohue T.J."/>
            <person name="Kaplan S."/>
        </authorList>
    </citation>
    <scope>NUCLEOTIDE SEQUENCE [LARGE SCALE GENOMIC DNA]</scope>
    <source>
        <strain>ATCC 17023 / DSM 158 / JCM 6121 / CCUG 31486 / LMG 2827 / NBRC 12203 / NCIMB 8253 / ATH 2.4.1.</strain>
    </source>
</reference>
<name>RS17_CERS4</name>
<comment type="function">
    <text evidence="1">One of the primary rRNA binding proteins, it binds specifically to the 5'-end of 16S ribosomal RNA.</text>
</comment>
<comment type="subunit">
    <text evidence="1">Part of the 30S ribosomal subunit.</text>
</comment>
<comment type="similarity">
    <text evidence="1">Belongs to the universal ribosomal protein uS17 family.</text>
</comment>
<proteinExistence type="inferred from homology"/>
<evidence type="ECO:0000255" key="1">
    <source>
        <dbReference type="HAMAP-Rule" id="MF_01345"/>
    </source>
</evidence>
<evidence type="ECO:0000305" key="2"/>
<gene>
    <name evidence="1" type="primary">rpsQ</name>
    <name type="ordered locus">RHOS4_03030</name>
    <name type="ORF">RSP_6017</name>
</gene>
<sequence length="80" mass="9257">MPKRILQGTVTSDKNEQTVTVLVERRFKHPLLKKTVRLSKKYRAHDPENQFKVGDIVRIEECAPISKTKRWKVVTDAVVA</sequence>